<protein>
    <recommendedName>
        <fullName>Uncharacterized protein YBL081W</fullName>
    </recommendedName>
</protein>
<reference key="1">
    <citation type="journal article" date="1995" name="Yeast">
        <title>Sequence analysis of a 78.6 kb segment of the left end of Saccharomyces cerevisiae chromosome II.</title>
        <authorList>
            <person name="Obermaier B."/>
            <person name="Gassenhuber J."/>
            <person name="Piravandi E."/>
            <person name="Domdey H."/>
        </authorList>
    </citation>
    <scope>NUCLEOTIDE SEQUENCE [GENOMIC DNA]</scope>
    <source>
        <strain>ATCC 204508 / S288c</strain>
    </source>
</reference>
<reference key="2">
    <citation type="journal article" date="1994" name="Yeast">
        <title>Sequence of a segment of yeast chromosome II shows two novel genes, one almost entirely hydrophobic and the other extremely asparagine-serine rich.</title>
        <authorList>
            <person name="Cusick M.E."/>
        </authorList>
    </citation>
    <scope>NUCLEOTIDE SEQUENCE [GENOMIC DNA]</scope>
</reference>
<reference key="3">
    <citation type="journal article" date="1994" name="EMBO J.">
        <title>Complete DNA sequence of yeast chromosome II.</title>
        <authorList>
            <person name="Feldmann H."/>
            <person name="Aigle M."/>
            <person name="Aljinovic G."/>
            <person name="Andre B."/>
            <person name="Baclet M.C."/>
            <person name="Barthe C."/>
            <person name="Baur A."/>
            <person name="Becam A.-M."/>
            <person name="Biteau N."/>
            <person name="Boles E."/>
            <person name="Brandt T."/>
            <person name="Brendel M."/>
            <person name="Brueckner M."/>
            <person name="Bussereau F."/>
            <person name="Christiansen C."/>
            <person name="Contreras R."/>
            <person name="Crouzet M."/>
            <person name="Cziepluch C."/>
            <person name="Demolis N."/>
            <person name="Delaveau T."/>
            <person name="Doignon F."/>
            <person name="Domdey H."/>
            <person name="Duesterhus S."/>
            <person name="Dubois E."/>
            <person name="Dujon B."/>
            <person name="El Bakkoury M."/>
            <person name="Entian K.-D."/>
            <person name="Feuermann M."/>
            <person name="Fiers W."/>
            <person name="Fobo G.M."/>
            <person name="Fritz C."/>
            <person name="Gassenhuber J."/>
            <person name="Glansdorff N."/>
            <person name="Goffeau A."/>
            <person name="Grivell L.A."/>
            <person name="de Haan M."/>
            <person name="Hein C."/>
            <person name="Herbert C.J."/>
            <person name="Hollenberg C.P."/>
            <person name="Holmstroem K."/>
            <person name="Jacq C."/>
            <person name="Jacquet M."/>
            <person name="Jauniaux J.-C."/>
            <person name="Jonniaux J.-L."/>
            <person name="Kallesoee T."/>
            <person name="Kiesau P."/>
            <person name="Kirchrath L."/>
            <person name="Koetter P."/>
            <person name="Korol S."/>
            <person name="Liebl S."/>
            <person name="Logghe M."/>
            <person name="Lohan A.J.E."/>
            <person name="Louis E.J."/>
            <person name="Li Z.Y."/>
            <person name="Maat M.J."/>
            <person name="Mallet L."/>
            <person name="Mannhaupt G."/>
            <person name="Messenguy F."/>
            <person name="Miosga T."/>
            <person name="Molemans F."/>
            <person name="Mueller S."/>
            <person name="Nasr F."/>
            <person name="Obermaier B."/>
            <person name="Perea J."/>
            <person name="Pierard A."/>
            <person name="Piravandi E."/>
            <person name="Pohl F.M."/>
            <person name="Pohl T.M."/>
            <person name="Potier S."/>
            <person name="Proft M."/>
            <person name="Purnelle B."/>
            <person name="Ramezani Rad M."/>
            <person name="Rieger M."/>
            <person name="Rose M."/>
            <person name="Schaaff-Gerstenschlaeger I."/>
            <person name="Scherens B."/>
            <person name="Schwarzlose C."/>
            <person name="Skala J."/>
            <person name="Slonimski P.P."/>
            <person name="Smits P.H.M."/>
            <person name="Souciet J.-L."/>
            <person name="Steensma H.Y."/>
            <person name="Stucka R."/>
            <person name="Urrestarazu L.A."/>
            <person name="van der Aart Q.J.M."/>
            <person name="Van Dyck L."/>
            <person name="Vassarotti A."/>
            <person name="Vetter I."/>
            <person name="Vierendeels F."/>
            <person name="Vissers S."/>
            <person name="Wagner G."/>
            <person name="de Wergifosse P."/>
            <person name="Wolfe K.H."/>
            <person name="Zagulski M."/>
            <person name="Zimmermann F.K."/>
            <person name="Mewes H.-W."/>
            <person name="Kleine K."/>
        </authorList>
    </citation>
    <scope>NUCLEOTIDE SEQUENCE [LARGE SCALE GENOMIC DNA]</scope>
    <source>
        <strain>ATCC 204508 / S288c</strain>
    </source>
</reference>
<reference key="4">
    <citation type="journal article" date="2014" name="G3 (Bethesda)">
        <title>The reference genome sequence of Saccharomyces cerevisiae: Then and now.</title>
        <authorList>
            <person name="Engel S.R."/>
            <person name="Dietrich F.S."/>
            <person name="Fisk D.G."/>
            <person name="Binkley G."/>
            <person name="Balakrishnan R."/>
            <person name="Costanzo M.C."/>
            <person name="Dwight S.S."/>
            <person name="Hitz B.C."/>
            <person name="Karra K."/>
            <person name="Nash R.S."/>
            <person name="Weng S."/>
            <person name="Wong E.D."/>
            <person name="Lloyd P."/>
            <person name="Skrzypek M.S."/>
            <person name="Miyasato S.R."/>
            <person name="Simison M."/>
            <person name="Cherry J.M."/>
        </authorList>
    </citation>
    <scope>GENOME REANNOTATION</scope>
    <source>
        <strain>ATCC 204508 / S288c</strain>
    </source>
</reference>
<reference key="5">
    <citation type="journal article" date="2007" name="Genome Res.">
        <title>Approaching a complete repository of sequence-verified protein-encoding clones for Saccharomyces cerevisiae.</title>
        <authorList>
            <person name="Hu Y."/>
            <person name="Rolfs A."/>
            <person name="Bhullar B."/>
            <person name="Murthy T.V.S."/>
            <person name="Zhu C."/>
            <person name="Berger M.F."/>
            <person name="Camargo A.A."/>
            <person name="Kelley F."/>
            <person name="McCarron S."/>
            <person name="Jepson D."/>
            <person name="Richardson A."/>
            <person name="Raphael J."/>
            <person name="Moreira D."/>
            <person name="Taycher E."/>
            <person name="Zuo D."/>
            <person name="Mohr S."/>
            <person name="Kane M.F."/>
            <person name="Williamson J."/>
            <person name="Simpson A.J.G."/>
            <person name="Bulyk M.L."/>
            <person name="Harlow E."/>
            <person name="Marsischky G."/>
            <person name="Kolodner R.D."/>
            <person name="LaBaer J."/>
        </authorList>
    </citation>
    <scope>NUCLEOTIDE SEQUENCE [GENOMIC DNA]</scope>
    <source>
        <strain>ATCC 204508 / S288c</strain>
    </source>
</reference>
<accession>P38180</accession>
<accession>D6VPS2</accession>
<feature type="chain" id="PRO_0000202447" description="Uncharacterized protein YBL081W">
    <location>
        <begin position="1"/>
        <end position="368"/>
    </location>
</feature>
<feature type="region of interest" description="Disordered" evidence="1">
    <location>
        <begin position="156"/>
        <end position="213"/>
    </location>
</feature>
<feature type="region of interest" description="Disordered" evidence="1">
    <location>
        <begin position="228"/>
        <end position="259"/>
    </location>
</feature>
<feature type="region of interest" description="Disordered" evidence="1">
    <location>
        <begin position="291"/>
        <end position="319"/>
    </location>
</feature>
<feature type="compositionally biased region" description="Low complexity" evidence="1">
    <location>
        <begin position="156"/>
        <end position="182"/>
    </location>
</feature>
<feature type="compositionally biased region" description="Polar residues" evidence="1">
    <location>
        <begin position="183"/>
        <end position="194"/>
    </location>
</feature>
<feature type="compositionally biased region" description="Low complexity" evidence="1">
    <location>
        <begin position="195"/>
        <end position="213"/>
    </location>
</feature>
<feature type="compositionally biased region" description="Low complexity" evidence="1">
    <location>
        <begin position="228"/>
        <end position="240"/>
    </location>
</feature>
<feature type="compositionally biased region" description="Polar residues" evidence="1">
    <location>
        <begin position="241"/>
        <end position="254"/>
    </location>
</feature>
<feature type="compositionally biased region" description="Polar residues" evidence="1">
    <location>
        <begin position="297"/>
        <end position="311"/>
    </location>
</feature>
<evidence type="ECO:0000256" key="1">
    <source>
        <dbReference type="SAM" id="MobiDB-lite"/>
    </source>
</evidence>
<proteinExistence type="predicted"/>
<name>YBI1_YEAST</name>
<dbReference type="EMBL" id="X79489">
    <property type="protein sequence ID" value="CAA56026.1"/>
    <property type="molecule type" value="Genomic_DNA"/>
</dbReference>
<dbReference type="EMBL" id="Z35842">
    <property type="protein sequence ID" value="CAA84902.1"/>
    <property type="molecule type" value="Genomic_DNA"/>
</dbReference>
<dbReference type="EMBL" id="M89908">
    <property type="protein sequence ID" value="AAA75353.1"/>
    <property type="molecule type" value="Genomic_DNA"/>
</dbReference>
<dbReference type="EMBL" id="AY692614">
    <property type="protein sequence ID" value="AAT92633.1"/>
    <property type="molecule type" value="Genomic_DNA"/>
</dbReference>
<dbReference type="EMBL" id="BK006936">
    <property type="protein sequence ID" value="DAA07042.1"/>
    <property type="molecule type" value="Genomic_DNA"/>
</dbReference>
<dbReference type="PIR" id="S46601">
    <property type="entry name" value="S46601"/>
</dbReference>
<dbReference type="RefSeq" id="NP_009472.1">
    <property type="nucleotide sequence ID" value="NM_001178321.1"/>
</dbReference>
<dbReference type="BioGRID" id="32622">
    <property type="interactions" value="147"/>
</dbReference>
<dbReference type="DIP" id="DIP-4137N"/>
<dbReference type="FunCoup" id="P38180">
    <property type="interactions" value="29"/>
</dbReference>
<dbReference type="IntAct" id="P38180">
    <property type="interactions" value="6"/>
</dbReference>
<dbReference type="MINT" id="P38180"/>
<dbReference type="STRING" id="4932.YBL081W"/>
<dbReference type="GlyGen" id="P38180">
    <property type="glycosylation" value="1 site"/>
</dbReference>
<dbReference type="iPTMnet" id="P38180"/>
<dbReference type="PaxDb" id="4932-YBL081W"/>
<dbReference type="PeptideAtlas" id="P38180"/>
<dbReference type="EnsemblFungi" id="YBL081W_mRNA">
    <property type="protein sequence ID" value="YBL081W"/>
    <property type="gene ID" value="YBL081W"/>
</dbReference>
<dbReference type="GeneID" id="852197"/>
<dbReference type="KEGG" id="sce:YBL081W"/>
<dbReference type="AGR" id="SGD:S000000177"/>
<dbReference type="SGD" id="S000000177">
    <property type="gene designation" value="YBL081W"/>
</dbReference>
<dbReference type="VEuPathDB" id="FungiDB:YBL081W"/>
<dbReference type="eggNOG" id="ENOG502S7EJ">
    <property type="taxonomic scope" value="Eukaryota"/>
</dbReference>
<dbReference type="HOGENOM" id="CLU_761203_0_0_1"/>
<dbReference type="InParanoid" id="P38180"/>
<dbReference type="OMA" id="NEDMDKY"/>
<dbReference type="OrthoDB" id="4067282at2759"/>
<dbReference type="BioCyc" id="YEAST:G3O-28972-MONOMER"/>
<dbReference type="BioGRID-ORCS" id="852197">
    <property type="hits" value="5 hits in 10 CRISPR screens"/>
</dbReference>
<dbReference type="PRO" id="PR:P38180"/>
<dbReference type="Proteomes" id="UP000002311">
    <property type="component" value="Chromosome II"/>
</dbReference>
<dbReference type="RNAct" id="P38180">
    <property type="molecule type" value="protein"/>
</dbReference>
<dbReference type="InterPro" id="IPR035257">
    <property type="entry name" value="DUF5349"/>
</dbReference>
<dbReference type="Pfam" id="PF17298">
    <property type="entry name" value="DUF5349"/>
    <property type="match status" value="1"/>
</dbReference>
<gene>
    <name type="ordered locus">YBL081W</name>
    <name type="ORF">YBL0722</name>
</gene>
<organism>
    <name type="scientific">Saccharomyces cerevisiae (strain ATCC 204508 / S288c)</name>
    <name type="common">Baker's yeast</name>
    <dbReference type="NCBI Taxonomy" id="559292"/>
    <lineage>
        <taxon>Eukaryota</taxon>
        <taxon>Fungi</taxon>
        <taxon>Dikarya</taxon>
        <taxon>Ascomycota</taxon>
        <taxon>Saccharomycotina</taxon>
        <taxon>Saccharomycetes</taxon>
        <taxon>Saccharomycetales</taxon>
        <taxon>Saccharomycetaceae</taxon>
        <taxon>Saccharomyces</taxon>
    </lineage>
</organism>
<keyword id="KW-1185">Reference proteome</keyword>
<sequence length="368" mass="40767">MPGQIISIPFLSQNEDMDKYLLEYRSLKLLHQSSNSFQSHNAPSHQSNYHPHYNHMKYNNTGSYYYYNNNNNSSVNPHNQAGLQSINRSIPSAPYGAYNQNRANDVPYMNTQKKHHRFSANNNLNQQKYKQYPQYTSNPMVTAHLKQTYPQLYYNSNVNAHNNNNNSNNNNNNNNNSNNNNNLYNQTQFSTRYFNSNSSPSLTSSTSNSSSPYNQSTFEYILPSTSAASTNLSSSSSNNSMHTNPTTATSTSADLINDLPVGPTSSSLISDLHSPPTVSFLPASQTLLMSSTTSSSIGTNINPPQHSPSPSQREDFSTAPVNMSSSASLLMNDSSLGWGSNHMNVSSSSQPASSRPFGIWNTDMSVWS</sequence>